<gene>
    <name evidence="1" type="primary">pyrD</name>
    <name type="ordered locus">HD_1626</name>
</gene>
<name>PYRD_HAEDU</name>
<keyword id="KW-1003">Cell membrane</keyword>
<keyword id="KW-0285">Flavoprotein</keyword>
<keyword id="KW-0288">FMN</keyword>
<keyword id="KW-0472">Membrane</keyword>
<keyword id="KW-0560">Oxidoreductase</keyword>
<keyword id="KW-0665">Pyrimidine biosynthesis</keyword>
<keyword id="KW-1185">Reference proteome</keyword>
<sequence length="335" mass="36436">MYSLIRKALFSMEAETAHYFSIQALKLMGKLPFSLCSTTLNPVEVMGLKFKNPIGLAAGADKNGEAIDGFAKLGFGFIEVGTVTPLAQDGNNKPRQFRILEAEGIINRNGFNNQGVDVLVENVKKASYDGILGINIGKNATTPIENALDDYQICLHKVYSYADYITVNISSPNTHNLRALQYGEALDHLLAELKTEQAKLAKKFNQYKPLVLKIAPDLTNEEIVSIADSLIRHQMDGVIAGNTTLSRENIAGFNHAHQQGGLSGKPLHTLSTKLISTLAKELKGKIPIIGSGGVHSIDSGQQKIDAGAHLLQLYSAMIYQGPTLIQELAKKIILR</sequence>
<organism>
    <name type="scientific">Haemophilus ducreyi (strain 35000HP / ATCC 700724)</name>
    <dbReference type="NCBI Taxonomy" id="233412"/>
    <lineage>
        <taxon>Bacteria</taxon>
        <taxon>Pseudomonadati</taxon>
        <taxon>Pseudomonadota</taxon>
        <taxon>Gammaproteobacteria</taxon>
        <taxon>Pasteurellales</taxon>
        <taxon>Pasteurellaceae</taxon>
        <taxon>Haemophilus</taxon>
    </lineage>
</organism>
<evidence type="ECO:0000255" key="1">
    <source>
        <dbReference type="HAMAP-Rule" id="MF_00225"/>
    </source>
</evidence>
<dbReference type="EC" id="1.3.5.2" evidence="1"/>
<dbReference type="EMBL" id="AE017143">
    <property type="protein sequence ID" value="AAP96403.1"/>
    <property type="molecule type" value="Genomic_DNA"/>
</dbReference>
<dbReference type="RefSeq" id="WP_010945435.1">
    <property type="nucleotide sequence ID" value="NC_002940.2"/>
</dbReference>
<dbReference type="SMR" id="Q7VL56"/>
<dbReference type="STRING" id="233412.HD_1626"/>
<dbReference type="KEGG" id="hdu:HD_1626"/>
<dbReference type="eggNOG" id="COG0167">
    <property type="taxonomic scope" value="Bacteria"/>
</dbReference>
<dbReference type="HOGENOM" id="CLU_013640_2_0_6"/>
<dbReference type="OrthoDB" id="9802377at2"/>
<dbReference type="UniPathway" id="UPA00070">
    <property type="reaction ID" value="UER00946"/>
</dbReference>
<dbReference type="Proteomes" id="UP000001022">
    <property type="component" value="Chromosome"/>
</dbReference>
<dbReference type="GO" id="GO:0005737">
    <property type="term" value="C:cytoplasm"/>
    <property type="evidence" value="ECO:0007669"/>
    <property type="project" value="InterPro"/>
</dbReference>
<dbReference type="GO" id="GO:0005886">
    <property type="term" value="C:plasma membrane"/>
    <property type="evidence" value="ECO:0007669"/>
    <property type="project" value="UniProtKB-SubCell"/>
</dbReference>
<dbReference type="GO" id="GO:0106430">
    <property type="term" value="F:dihydroorotate dehydrogenase (quinone) activity"/>
    <property type="evidence" value="ECO:0007669"/>
    <property type="project" value="UniProtKB-EC"/>
</dbReference>
<dbReference type="GO" id="GO:0006207">
    <property type="term" value="P:'de novo' pyrimidine nucleobase biosynthetic process"/>
    <property type="evidence" value="ECO:0007669"/>
    <property type="project" value="InterPro"/>
</dbReference>
<dbReference type="GO" id="GO:0044205">
    <property type="term" value="P:'de novo' UMP biosynthetic process"/>
    <property type="evidence" value="ECO:0007669"/>
    <property type="project" value="UniProtKB-UniRule"/>
</dbReference>
<dbReference type="CDD" id="cd04738">
    <property type="entry name" value="DHOD_2_like"/>
    <property type="match status" value="1"/>
</dbReference>
<dbReference type="FunFam" id="3.20.20.70:FF:000028">
    <property type="entry name" value="Dihydroorotate dehydrogenase (quinone)"/>
    <property type="match status" value="1"/>
</dbReference>
<dbReference type="Gene3D" id="3.20.20.70">
    <property type="entry name" value="Aldolase class I"/>
    <property type="match status" value="1"/>
</dbReference>
<dbReference type="HAMAP" id="MF_00225">
    <property type="entry name" value="DHO_dh_type2"/>
    <property type="match status" value="1"/>
</dbReference>
<dbReference type="InterPro" id="IPR013785">
    <property type="entry name" value="Aldolase_TIM"/>
</dbReference>
<dbReference type="InterPro" id="IPR050074">
    <property type="entry name" value="DHO_dehydrogenase"/>
</dbReference>
<dbReference type="InterPro" id="IPR012135">
    <property type="entry name" value="Dihydroorotate_DH_1_2"/>
</dbReference>
<dbReference type="InterPro" id="IPR005719">
    <property type="entry name" value="Dihydroorotate_DH_2"/>
</dbReference>
<dbReference type="InterPro" id="IPR005720">
    <property type="entry name" value="Dihydroorotate_DH_cat"/>
</dbReference>
<dbReference type="InterPro" id="IPR001295">
    <property type="entry name" value="Dihydroorotate_DH_CS"/>
</dbReference>
<dbReference type="NCBIfam" id="NF003644">
    <property type="entry name" value="PRK05286.1-1"/>
    <property type="match status" value="1"/>
</dbReference>
<dbReference type="NCBIfam" id="NF003645">
    <property type="entry name" value="PRK05286.1-2"/>
    <property type="match status" value="1"/>
</dbReference>
<dbReference type="NCBIfam" id="NF003646">
    <property type="entry name" value="PRK05286.1-4"/>
    <property type="match status" value="1"/>
</dbReference>
<dbReference type="NCBIfam" id="NF003652">
    <property type="entry name" value="PRK05286.2-5"/>
    <property type="match status" value="1"/>
</dbReference>
<dbReference type="NCBIfam" id="TIGR01036">
    <property type="entry name" value="pyrD_sub2"/>
    <property type="match status" value="1"/>
</dbReference>
<dbReference type="PANTHER" id="PTHR48109:SF4">
    <property type="entry name" value="DIHYDROOROTATE DEHYDROGENASE (QUINONE), MITOCHONDRIAL"/>
    <property type="match status" value="1"/>
</dbReference>
<dbReference type="PANTHER" id="PTHR48109">
    <property type="entry name" value="DIHYDROOROTATE DEHYDROGENASE (QUINONE), MITOCHONDRIAL-RELATED"/>
    <property type="match status" value="1"/>
</dbReference>
<dbReference type="Pfam" id="PF01180">
    <property type="entry name" value="DHO_dh"/>
    <property type="match status" value="1"/>
</dbReference>
<dbReference type="PIRSF" id="PIRSF000164">
    <property type="entry name" value="DHO_oxidase"/>
    <property type="match status" value="1"/>
</dbReference>
<dbReference type="SUPFAM" id="SSF51395">
    <property type="entry name" value="FMN-linked oxidoreductases"/>
    <property type="match status" value="1"/>
</dbReference>
<dbReference type="PROSITE" id="PS00911">
    <property type="entry name" value="DHODEHASE_1"/>
    <property type="match status" value="1"/>
</dbReference>
<protein>
    <recommendedName>
        <fullName evidence="1">Dihydroorotate dehydrogenase (quinone)</fullName>
        <ecNumber evidence="1">1.3.5.2</ecNumber>
    </recommendedName>
    <alternativeName>
        <fullName evidence="1">DHOdehase</fullName>
        <shortName evidence="1">DHOD</shortName>
        <shortName evidence="1">DHODase</shortName>
    </alternativeName>
    <alternativeName>
        <fullName evidence="1">Dihydroorotate oxidase</fullName>
    </alternativeName>
</protein>
<reference key="1">
    <citation type="submission" date="2003-06" db="EMBL/GenBank/DDBJ databases">
        <title>The complete genome sequence of Haemophilus ducreyi.</title>
        <authorList>
            <person name="Munson R.S. Jr."/>
            <person name="Ray W.C."/>
            <person name="Mahairas G."/>
            <person name="Sabo P."/>
            <person name="Mungur R."/>
            <person name="Johnson L."/>
            <person name="Nguyen D."/>
            <person name="Wang J."/>
            <person name="Forst C."/>
            <person name="Hood L."/>
        </authorList>
    </citation>
    <scope>NUCLEOTIDE SEQUENCE [LARGE SCALE GENOMIC DNA]</scope>
    <source>
        <strain>35000HP / ATCC 700724</strain>
    </source>
</reference>
<feature type="chain" id="PRO_0000148443" description="Dihydroorotate dehydrogenase (quinone)">
    <location>
        <begin position="1"/>
        <end position="335"/>
    </location>
</feature>
<feature type="active site" description="Nucleophile" evidence="1">
    <location>
        <position position="171"/>
    </location>
</feature>
<feature type="binding site" evidence="1">
    <location>
        <begin position="58"/>
        <end position="62"/>
    </location>
    <ligand>
        <name>FMN</name>
        <dbReference type="ChEBI" id="CHEBI:58210"/>
    </ligand>
</feature>
<feature type="binding site" evidence="1">
    <location>
        <position position="62"/>
    </location>
    <ligand>
        <name>substrate</name>
    </ligand>
</feature>
<feature type="binding site" evidence="1">
    <location>
        <position position="82"/>
    </location>
    <ligand>
        <name>FMN</name>
        <dbReference type="ChEBI" id="CHEBI:58210"/>
    </ligand>
</feature>
<feature type="binding site" evidence="1">
    <location>
        <begin position="107"/>
        <end position="111"/>
    </location>
    <ligand>
        <name>substrate</name>
    </ligand>
</feature>
<feature type="binding site" evidence="1">
    <location>
        <position position="135"/>
    </location>
    <ligand>
        <name>FMN</name>
        <dbReference type="ChEBI" id="CHEBI:58210"/>
    </ligand>
</feature>
<feature type="binding site" evidence="1">
    <location>
        <position position="168"/>
    </location>
    <ligand>
        <name>FMN</name>
        <dbReference type="ChEBI" id="CHEBI:58210"/>
    </ligand>
</feature>
<feature type="binding site" evidence="1">
    <location>
        <position position="168"/>
    </location>
    <ligand>
        <name>substrate</name>
    </ligand>
</feature>
<feature type="binding site" evidence="1">
    <location>
        <position position="173"/>
    </location>
    <ligand>
        <name>substrate</name>
    </ligand>
</feature>
<feature type="binding site" evidence="1">
    <location>
        <position position="213"/>
    </location>
    <ligand>
        <name>FMN</name>
        <dbReference type="ChEBI" id="CHEBI:58210"/>
    </ligand>
</feature>
<feature type="binding site" evidence="1">
    <location>
        <position position="241"/>
    </location>
    <ligand>
        <name>FMN</name>
        <dbReference type="ChEBI" id="CHEBI:58210"/>
    </ligand>
</feature>
<feature type="binding site" evidence="1">
    <location>
        <begin position="242"/>
        <end position="243"/>
    </location>
    <ligand>
        <name>substrate</name>
    </ligand>
</feature>
<feature type="binding site" evidence="1">
    <location>
        <position position="264"/>
    </location>
    <ligand>
        <name>FMN</name>
        <dbReference type="ChEBI" id="CHEBI:58210"/>
    </ligand>
</feature>
<feature type="binding site" evidence="1">
    <location>
        <position position="293"/>
    </location>
    <ligand>
        <name>FMN</name>
        <dbReference type="ChEBI" id="CHEBI:58210"/>
    </ligand>
</feature>
<feature type="binding site" evidence="1">
    <location>
        <begin position="314"/>
        <end position="315"/>
    </location>
    <ligand>
        <name>FMN</name>
        <dbReference type="ChEBI" id="CHEBI:58210"/>
    </ligand>
</feature>
<comment type="function">
    <text evidence="1">Catalyzes the conversion of dihydroorotate to orotate with quinone as electron acceptor.</text>
</comment>
<comment type="catalytic activity">
    <reaction evidence="1">
        <text>(S)-dihydroorotate + a quinone = orotate + a quinol</text>
        <dbReference type="Rhea" id="RHEA:30187"/>
        <dbReference type="ChEBI" id="CHEBI:24646"/>
        <dbReference type="ChEBI" id="CHEBI:30839"/>
        <dbReference type="ChEBI" id="CHEBI:30864"/>
        <dbReference type="ChEBI" id="CHEBI:132124"/>
        <dbReference type="EC" id="1.3.5.2"/>
    </reaction>
</comment>
<comment type="cofactor">
    <cofactor evidence="1">
        <name>FMN</name>
        <dbReference type="ChEBI" id="CHEBI:58210"/>
    </cofactor>
    <text evidence="1">Binds 1 FMN per subunit.</text>
</comment>
<comment type="pathway">
    <text evidence="1">Pyrimidine metabolism; UMP biosynthesis via de novo pathway; orotate from (S)-dihydroorotate (quinone route): step 1/1.</text>
</comment>
<comment type="subunit">
    <text evidence="1">Monomer.</text>
</comment>
<comment type="subcellular location">
    <subcellularLocation>
        <location evidence="1">Cell membrane</location>
        <topology evidence="1">Peripheral membrane protein</topology>
    </subcellularLocation>
</comment>
<comment type="similarity">
    <text evidence="1">Belongs to the dihydroorotate dehydrogenase family. Type 2 subfamily.</text>
</comment>
<accession>Q7VL56</accession>
<proteinExistence type="inferred from homology"/>